<gene>
    <name type="ordered locus">Maqu_0976</name>
</gene>
<keyword id="KW-0456">Lyase</keyword>
<name>PHS_MARN8</name>
<organism>
    <name type="scientific">Marinobacter nauticus (strain ATCC 700491 / DSM 11845 / VT8)</name>
    <name type="common">Marinobacter aquaeolei</name>
    <dbReference type="NCBI Taxonomy" id="351348"/>
    <lineage>
        <taxon>Bacteria</taxon>
        <taxon>Pseudomonadati</taxon>
        <taxon>Pseudomonadota</taxon>
        <taxon>Gammaproteobacteria</taxon>
        <taxon>Pseudomonadales</taxon>
        <taxon>Marinobacteraceae</taxon>
        <taxon>Marinobacter</taxon>
    </lineage>
</organism>
<dbReference type="EC" id="4.2.1.96" evidence="1"/>
<dbReference type="EMBL" id="CP000514">
    <property type="protein sequence ID" value="ABM18072.1"/>
    <property type="molecule type" value="Genomic_DNA"/>
</dbReference>
<dbReference type="RefSeq" id="WP_011784492.1">
    <property type="nucleotide sequence ID" value="NC_008740.1"/>
</dbReference>
<dbReference type="SMR" id="A1TZA3"/>
<dbReference type="STRING" id="351348.Maqu_0976"/>
<dbReference type="KEGG" id="maq:Maqu_0976"/>
<dbReference type="eggNOG" id="COG2154">
    <property type="taxonomic scope" value="Bacteria"/>
</dbReference>
<dbReference type="HOGENOM" id="CLU_081974_2_2_6"/>
<dbReference type="OrthoDB" id="5294615at2"/>
<dbReference type="Proteomes" id="UP000000998">
    <property type="component" value="Chromosome"/>
</dbReference>
<dbReference type="GO" id="GO:0008124">
    <property type="term" value="F:4-alpha-hydroxytetrahydrobiopterin dehydratase activity"/>
    <property type="evidence" value="ECO:0007669"/>
    <property type="project" value="UniProtKB-UniRule"/>
</dbReference>
<dbReference type="GO" id="GO:0006729">
    <property type="term" value="P:tetrahydrobiopterin biosynthetic process"/>
    <property type="evidence" value="ECO:0007669"/>
    <property type="project" value="InterPro"/>
</dbReference>
<dbReference type="CDD" id="cd00913">
    <property type="entry name" value="PCD_DCoH_subfamily_a"/>
    <property type="match status" value="1"/>
</dbReference>
<dbReference type="Gene3D" id="3.30.1360.20">
    <property type="entry name" value="Transcriptional coactivator/pterin dehydratase"/>
    <property type="match status" value="1"/>
</dbReference>
<dbReference type="HAMAP" id="MF_00434">
    <property type="entry name" value="Pterin_4_alpha"/>
    <property type="match status" value="1"/>
</dbReference>
<dbReference type="InterPro" id="IPR036428">
    <property type="entry name" value="PCD_sf"/>
</dbReference>
<dbReference type="InterPro" id="IPR050376">
    <property type="entry name" value="Pterin-4-alpha-carb_dehyd"/>
</dbReference>
<dbReference type="InterPro" id="IPR001533">
    <property type="entry name" value="Pterin_deHydtase"/>
</dbReference>
<dbReference type="NCBIfam" id="NF002016">
    <property type="entry name" value="PRK00823.1-1"/>
    <property type="match status" value="1"/>
</dbReference>
<dbReference type="PANTHER" id="PTHR42805">
    <property type="entry name" value="PTERIN-4-ALPHA-CARBINOLAMINE DEHYDRATASE-RELATED"/>
    <property type="match status" value="1"/>
</dbReference>
<dbReference type="PANTHER" id="PTHR42805:SF1">
    <property type="entry name" value="PTERIN-4-ALPHA-CARBINOLAMINE DEHYDRATASE-RELATED"/>
    <property type="match status" value="1"/>
</dbReference>
<dbReference type="Pfam" id="PF01329">
    <property type="entry name" value="Pterin_4a"/>
    <property type="match status" value="1"/>
</dbReference>
<dbReference type="SUPFAM" id="SSF55248">
    <property type="entry name" value="PCD-like"/>
    <property type="match status" value="1"/>
</dbReference>
<accession>A1TZA3</accession>
<feature type="chain" id="PRO_1000050418" description="Putative pterin-4-alpha-carbinolamine dehydratase">
    <location>
        <begin position="1"/>
        <end position="111"/>
    </location>
</feature>
<evidence type="ECO:0000255" key="1">
    <source>
        <dbReference type="HAMAP-Rule" id="MF_00434"/>
    </source>
</evidence>
<comment type="catalytic activity">
    <reaction evidence="1">
        <text>(4aS,6R)-4a-hydroxy-L-erythro-5,6,7,8-tetrahydrobiopterin = (6R)-L-erythro-6,7-dihydrobiopterin + H2O</text>
        <dbReference type="Rhea" id="RHEA:11920"/>
        <dbReference type="ChEBI" id="CHEBI:15377"/>
        <dbReference type="ChEBI" id="CHEBI:15642"/>
        <dbReference type="ChEBI" id="CHEBI:43120"/>
        <dbReference type="EC" id="4.2.1.96"/>
    </reaction>
</comment>
<comment type="similarity">
    <text evidence="1">Belongs to the pterin-4-alpha-carbinolamine dehydratase family.</text>
</comment>
<reference key="1">
    <citation type="journal article" date="2011" name="Appl. Environ. Microbiol.">
        <title>Genomic potential of Marinobacter aquaeolei, a biogeochemical 'opportunitroph'.</title>
        <authorList>
            <person name="Singer E."/>
            <person name="Webb E.A."/>
            <person name="Nelson W.C."/>
            <person name="Heidelberg J.F."/>
            <person name="Ivanova N."/>
            <person name="Pati A."/>
            <person name="Edwards K.J."/>
        </authorList>
    </citation>
    <scope>NUCLEOTIDE SEQUENCE [LARGE SCALE GENOMIC DNA]</scope>
    <source>
        <strain>ATCC 700491 / DSM 11845 / VT8</strain>
    </source>
</reference>
<proteinExistence type="inferred from homology"/>
<protein>
    <recommendedName>
        <fullName evidence="1">Putative pterin-4-alpha-carbinolamine dehydratase</fullName>
        <shortName evidence="1">PHS</shortName>
        <ecNumber evidence="1">4.2.1.96</ecNumber>
    </recommendedName>
    <alternativeName>
        <fullName evidence="1">4-alpha-hydroxy-tetrahydropterin dehydratase</fullName>
    </alternativeName>
    <alternativeName>
        <fullName evidence="1">Pterin carbinolamine dehydratase</fullName>
        <shortName evidence="1">PCD</shortName>
    </alternativeName>
</protein>
<sequence>MSNLGQQSCSACSADAPQVTDAEKQTLLKDVPEWQLIVQDGEEQLQRVFTFKNFVQAQAFTNKVADLAEEEGHHPAILLEWGKATVRWWTHKIGGLHKNDFIMAARTDELY</sequence>